<proteinExistence type="inferred from homology"/>
<dbReference type="EMBL" id="U51383">
    <property type="protein sequence ID" value="AAB38610.1"/>
    <property type="molecule type" value="Genomic_DNA"/>
</dbReference>
<dbReference type="SMR" id="P79866"/>
<dbReference type="GO" id="GO:0005615">
    <property type="term" value="C:extracellular space"/>
    <property type="evidence" value="ECO:0007669"/>
    <property type="project" value="TreeGrafter"/>
</dbReference>
<dbReference type="GO" id="GO:0005886">
    <property type="term" value="C:plasma membrane"/>
    <property type="evidence" value="ECO:0007669"/>
    <property type="project" value="UniProtKB-SubCell"/>
</dbReference>
<dbReference type="GO" id="GO:0005509">
    <property type="term" value="F:calcium ion binding"/>
    <property type="evidence" value="ECO:0007669"/>
    <property type="project" value="TreeGrafter"/>
</dbReference>
<dbReference type="GO" id="GO:0005113">
    <property type="term" value="F:patched binding"/>
    <property type="evidence" value="ECO:0007669"/>
    <property type="project" value="TreeGrafter"/>
</dbReference>
<dbReference type="GO" id="GO:0008233">
    <property type="term" value="F:peptidase activity"/>
    <property type="evidence" value="ECO:0007669"/>
    <property type="project" value="UniProtKB-KW"/>
</dbReference>
<dbReference type="GO" id="GO:0001708">
    <property type="term" value="P:cell fate specification"/>
    <property type="evidence" value="ECO:0007669"/>
    <property type="project" value="TreeGrafter"/>
</dbReference>
<dbReference type="GO" id="GO:0007267">
    <property type="term" value="P:cell-cell signaling"/>
    <property type="evidence" value="ECO:0007669"/>
    <property type="project" value="InterPro"/>
</dbReference>
<dbReference type="GO" id="GO:0006508">
    <property type="term" value="P:proteolysis"/>
    <property type="evidence" value="ECO:0007669"/>
    <property type="project" value="UniProtKB-KW"/>
</dbReference>
<dbReference type="GO" id="GO:0010468">
    <property type="term" value="P:regulation of gene expression"/>
    <property type="evidence" value="ECO:0007669"/>
    <property type="project" value="TreeGrafter"/>
</dbReference>
<dbReference type="GO" id="GO:0007224">
    <property type="term" value="P:smoothened signaling pathway"/>
    <property type="evidence" value="ECO:0007669"/>
    <property type="project" value="TreeGrafter"/>
</dbReference>
<dbReference type="Gene3D" id="3.30.1380.10">
    <property type="match status" value="1"/>
</dbReference>
<dbReference type="InterPro" id="IPR001657">
    <property type="entry name" value="Hedgehog"/>
</dbReference>
<dbReference type="InterPro" id="IPR009045">
    <property type="entry name" value="Hedgehog_sig/DD-Pept_Zn-bd_sf"/>
</dbReference>
<dbReference type="InterPro" id="IPR050387">
    <property type="entry name" value="Hedgehog_Signaling"/>
</dbReference>
<dbReference type="InterPro" id="IPR000320">
    <property type="entry name" value="Hedgehog_signalling_dom"/>
</dbReference>
<dbReference type="PANTHER" id="PTHR11889">
    <property type="entry name" value="HEDGEHOG"/>
    <property type="match status" value="1"/>
</dbReference>
<dbReference type="PANTHER" id="PTHR11889:SF39">
    <property type="entry name" value="INDIAN HEDGEHOG PROTEIN"/>
    <property type="match status" value="1"/>
</dbReference>
<dbReference type="Pfam" id="PF01085">
    <property type="entry name" value="HH_signal"/>
    <property type="match status" value="1"/>
</dbReference>
<dbReference type="PRINTS" id="PR00632">
    <property type="entry name" value="SONICHHOG"/>
</dbReference>
<dbReference type="SUPFAM" id="SSF55166">
    <property type="entry name" value="Hedgehog/DD-peptidase"/>
    <property type="match status" value="1"/>
</dbReference>
<organism>
    <name type="scientific">Trigonostigma heteromorpha</name>
    <name type="common">Harlequin rasbora</name>
    <name type="synonym">Rasbora heteromorpha</name>
    <dbReference type="NCBI Taxonomy" id="432397"/>
    <lineage>
        <taxon>Eukaryota</taxon>
        <taxon>Metazoa</taxon>
        <taxon>Chordata</taxon>
        <taxon>Craniata</taxon>
        <taxon>Vertebrata</taxon>
        <taxon>Euteleostomi</taxon>
        <taxon>Actinopterygii</taxon>
        <taxon>Neopterygii</taxon>
        <taxon>Teleostei</taxon>
        <taxon>Ostariophysi</taxon>
        <taxon>Cypriniformes</taxon>
        <taxon>Danionidae</taxon>
        <taxon>Rasborinae</taxon>
        <taxon>Trigonostigma</taxon>
    </lineage>
</organism>
<comment type="function">
    <text evidence="1">Intercellular signal essential for a variety of patterning events during development.</text>
</comment>
<comment type="subcellular location">
    <subcellularLocation>
        <location evidence="1">Cell membrane</location>
    </subcellularLocation>
    <subcellularLocation>
        <location evidence="1">Secreted</location>
        <location evidence="1">Extracellular space</location>
    </subcellularLocation>
    <text evidence="1">Indian hedgehog protein N-product: Cell membrane; Lipid-anchor; Extracellular side. The N-terminal peptide remains associated with the cell surface. Indian hedgehog protein C-product: Secreted, extracellular space. The C-terminal peptide diffuses from the cell.</text>
</comment>
<comment type="domain">
    <text evidence="1">The indian hedgehog protein N-product binds calcium and zinc ions; this stabilizes the protein fold and is essential for protein-protein interactions mediated by this domain.</text>
</comment>
<comment type="PTM">
    <text evidence="1">The C-terminal domain displays an autoproteolysis activity and a cholesterol transferase activity. Both activities result in the cleavage of the full-length protein and covalent attachment of a cholesterol moiety to the C-terminal of the newly generated N-terminal fragment (N-product). The N-product is the active species in both local and long-range signaling, whereas the C-product has no signaling activity (By similarity).</text>
</comment>
<comment type="PTM">
    <text evidence="1">Cholesterylation is required for N-product targeting to lipid rafts and multimerization.</text>
</comment>
<comment type="PTM">
    <text evidence="1">N-palmitoylation is required for N-product multimerization and full activity.</text>
</comment>
<comment type="similarity">
    <text evidence="3">Belongs to the hedgehog family.</text>
</comment>
<accession>P79866</accession>
<gene>
    <name type="primary">ihh</name>
</gene>
<feature type="chain" id="PRO_0000058748" description="Indian hedgehog protein">
    <location>
        <begin position="1" status="less than"/>
        <end position="58" status="greater than"/>
    </location>
</feature>
<feature type="binding site" evidence="2">
    <location>
        <position position="13"/>
    </location>
    <ligand>
        <name>Ca(2+)</name>
        <dbReference type="ChEBI" id="CHEBI:29108"/>
        <label>1</label>
    </ligand>
</feature>
<feature type="binding site" evidence="2">
    <location>
        <position position="14"/>
    </location>
    <ligand>
        <name>Ca(2+)</name>
        <dbReference type="ChEBI" id="CHEBI:29108"/>
        <label>1</label>
    </ligand>
</feature>
<feature type="binding site" evidence="2">
    <location>
        <position position="14"/>
    </location>
    <ligand>
        <name>Ca(2+)</name>
        <dbReference type="ChEBI" id="CHEBI:29108"/>
        <label>2</label>
    </ligand>
</feature>
<feature type="binding site" evidence="2">
    <location>
        <position position="17"/>
    </location>
    <ligand>
        <name>Ca(2+)</name>
        <dbReference type="ChEBI" id="CHEBI:29108"/>
        <label>2</label>
    </ligand>
</feature>
<feature type="binding site" evidence="2">
    <location>
        <position position="19"/>
    </location>
    <ligand>
        <name>Ca(2+)</name>
        <dbReference type="ChEBI" id="CHEBI:29108"/>
        <label>2</label>
    </ligand>
</feature>
<feature type="binding site" evidence="2">
    <location>
        <position position="28"/>
    </location>
    <ligand>
        <name>Zn(2+)</name>
        <dbReference type="ChEBI" id="CHEBI:29105"/>
    </ligand>
</feature>
<feature type="binding site" evidence="2">
    <location>
        <position position="35"/>
    </location>
    <ligand>
        <name>Zn(2+)</name>
        <dbReference type="ChEBI" id="CHEBI:29105"/>
    </ligand>
</feature>
<feature type="non-terminal residue">
    <location>
        <position position="1"/>
    </location>
</feature>
<feature type="non-terminal residue">
    <location>
        <position position="58"/>
    </location>
</feature>
<evidence type="ECO:0000250" key="1"/>
<evidence type="ECO:0000250" key="2">
    <source>
        <dbReference type="UniProtKB" id="Q14623"/>
    </source>
</evidence>
<evidence type="ECO:0000305" key="3"/>
<protein>
    <recommendedName>
        <fullName>Indian hedgehog protein</fullName>
        <shortName>IHH</shortName>
    </recommendedName>
</protein>
<name>IHH_TRIHE</name>
<reference key="1">
    <citation type="journal article" date="1996" name="Proc. Natl. Acad. Sci. U.S.A.">
        <title>Evolutionary analyses of hedgehog and Hoxd-10 genes in fish species closely related to the zebrafish.</title>
        <authorList>
            <person name="Zardoya R."/>
            <person name="Abouheif E."/>
            <person name="Meyer A."/>
        </authorList>
    </citation>
    <scope>NUCLEOTIDE SEQUENCE [GENOMIC DNA]</scope>
    <source>
        <tissue>Muscle</tissue>
    </source>
</reference>
<keyword id="KW-0068">Autocatalytic cleavage</keyword>
<keyword id="KW-0106">Calcium</keyword>
<keyword id="KW-1003">Cell membrane</keyword>
<keyword id="KW-0217">Developmental protein</keyword>
<keyword id="KW-0378">Hydrolase</keyword>
<keyword id="KW-0449">Lipoprotein</keyword>
<keyword id="KW-0472">Membrane</keyword>
<keyword id="KW-0479">Metal-binding</keyword>
<keyword id="KW-0564">Palmitate</keyword>
<keyword id="KW-0645">Protease</keyword>
<keyword id="KW-0964">Secreted</keyword>
<keyword id="KW-0862">Zinc</keyword>
<sequence>VMNLWPGVRLRVTEGWDEDGHHSEESLHYEGRAVDITASDRDRNKYAMLARLAVEAGF</sequence>